<evidence type="ECO:0000255" key="1">
    <source>
        <dbReference type="HAMAP-Rule" id="MF_01539"/>
    </source>
</evidence>
<feature type="chain" id="PRO_1000068755" description="tRNA(Met) cytidine acetate ligase">
    <location>
        <begin position="1"/>
        <end position="418"/>
    </location>
</feature>
<feature type="binding site" evidence="1">
    <location>
        <position position="95"/>
    </location>
    <ligand>
        <name>ATP</name>
        <dbReference type="ChEBI" id="CHEBI:30616"/>
    </ligand>
</feature>
<feature type="binding site" evidence="1">
    <location>
        <position position="161"/>
    </location>
    <ligand>
        <name>ATP</name>
        <dbReference type="ChEBI" id="CHEBI:30616"/>
    </ligand>
</feature>
<feature type="binding site" evidence="1">
    <location>
        <position position="186"/>
    </location>
    <ligand>
        <name>ATP</name>
        <dbReference type="ChEBI" id="CHEBI:30616"/>
    </ligand>
</feature>
<comment type="function">
    <text evidence="1">Catalyzes the formation of N(4)-acetylcytidine (ac(4)C) at the wobble position of elongator tRNA(Met), using acetate and ATP as substrates. First activates an acetate ion to form acetyladenylate (Ac-AMP) and then transfers the acetyl group to tRNA to form ac(4)C34.</text>
</comment>
<comment type="catalytic activity">
    <reaction evidence="1">
        <text>cytidine(34) in elongator tRNA(Met) + acetate + ATP = N(4)-acetylcytidine(34) in elongator tRNA(Met) + AMP + diphosphate</text>
        <dbReference type="Rhea" id="RHEA:58144"/>
        <dbReference type="Rhea" id="RHEA-COMP:10693"/>
        <dbReference type="Rhea" id="RHEA-COMP:10694"/>
        <dbReference type="ChEBI" id="CHEBI:30089"/>
        <dbReference type="ChEBI" id="CHEBI:30616"/>
        <dbReference type="ChEBI" id="CHEBI:33019"/>
        <dbReference type="ChEBI" id="CHEBI:74900"/>
        <dbReference type="ChEBI" id="CHEBI:82748"/>
        <dbReference type="ChEBI" id="CHEBI:456215"/>
    </reaction>
</comment>
<comment type="subcellular location">
    <subcellularLocation>
        <location evidence="1">Cytoplasm</location>
    </subcellularLocation>
</comment>
<comment type="similarity">
    <text evidence="1">Belongs to the TmcAL family.</text>
</comment>
<keyword id="KW-0067">ATP-binding</keyword>
<keyword id="KW-0963">Cytoplasm</keyword>
<keyword id="KW-0436">Ligase</keyword>
<keyword id="KW-0547">Nucleotide-binding</keyword>
<keyword id="KW-0694">RNA-binding</keyword>
<keyword id="KW-0819">tRNA processing</keyword>
<keyword id="KW-0820">tRNA-binding</keyword>
<sequence>MEYNPFHNGHLYHLTSARELVRPDYTIAVMSGNFCQRGEPAVIDKFARAEIALRMGIDVVLELPVVFATQDAGGFAFGAVSVLDATGVVTDVVFGSESNDIGFLQRVAQILYEQPDEYQKFLHEELKKGYSFPNARKYALMRYFSMKGWNEEEVLRLEKSNDILGVEYIHSALKIGSNIRFHTIKRVGAEEKDTSFRGRFSSATAIRNLIREERWEEVRDSLPEDSFEILMREINEGRGPVFLENMGDFLLSFFRLKNMEFFERIHGFSEGLEKRFHICARQTGSYQDFLECVKAKRFTFSRIRRLALFSVFEVNKEFVEKSNAKGPQYIRILGFTEKGRKILSLMRKKAKLPIVTNMSLYRKVLEKTDLPVDKQLFFEQIDLDVRTTNFYSMFFPAVEQRCGERDFSIHPIFLRTET</sequence>
<proteinExistence type="inferred from homology"/>
<reference key="1">
    <citation type="submission" date="2007-05" db="EMBL/GenBank/DDBJ databases">
        <title>Complete sequence of Thermotoga petrophila RKU-1.</title>
        <authorList>
            <consortium name="US DOE Joint Genome Institute"/>
            <person name="Copeland A."/>
            <person name="Lucas S."/>
            <person name="Lapidus A."/>
            <person name="Barry K."/>
            <person name="Glavina del Rio T."/>
            <person name="Dalin E."/>
            <person name="Tice H."/>
            <person name="Pitluck S."/>
            <person name="Sims D."/>
            <person name="Brettin T."/>
            <person name="Bruce D."/>
            <person name="Detter J.C."/>
            <person name="Han C."/>
            <person name="Tapia R."/>
            <person name="Schmutz J."/>
            <person name="Larimer F."/>
            <person name="Land M."/>
            <person name="Hauser L."/>
            <person name="Kyrpides N."/>
            <person name="Mikhailova N."/>
            <person name="Nelson K."/>
            <person name="Gogarten J.P."/>
            <person name="Noll K."/>
            <person name="Richardson P."/>
        </authorList>
    </citation>
    <scope>NUCLEOTIDE SEQUENCE [LARGE SCALE GENOMIC DNA]</scope>
    <source>
        <strain>ATCC BAA-488 / DSM 13995 / JCM 10881 / RKU-1</strain>
    </source>
</reference>
<name>TMCAL_THEP1</name>
<protein>
    <recommendedName>
        <fullName evidence="1">tRNA(Met) cytidine acetate ligase</fullName>
        <ecNumber evidence="1">6.3.4.-</ecNumber>
    </recommendedName>
</protein>
<accession>A5IM70</accession>
<gene>
    <name evidence="1" type="primary">tmcAL</name>
    <name type="ordered locus">Tpet_1279</name>
</gene>
<dbReference type="EC" id="6.3.4.-" evidence="1"/>
<dbReference type="EMBL" id="CP000702">
    <property type="protein sequence ID" value="ABQ47293.1"/>
    <property type="molecule type" value="Genomic_DNA"/>
</dbReference>
<dbReference type="SMR" id="A5IM70"/>
<dbReference type="STRING" id="390874.Tpet_1279"/>
<dbReference type="KEGG" id="tpt:Tpet_1279"/>
<dbReference type="eggNOG" id="COG1323">
    <property type="taxonomic scope" value="Bacteria"/>
</dbReference>
<dbReference type="HOGENOM" id="CLU_038915_0_1_0"/>
<dbReference type="Proteomes" id="UP000006558">
    <property type="component" value="Chromosome"/>
</dbReference>
<dbReference type="GO" id="GO:0005737">
    <property type="term" value="C:cytoplasm"/>
    <property type="evidence" value="ECO:0007669"/>
    <property type="project" value="UniProtKB-SubCell"/>
</dbReference>
<dbReference type="GO" id="GO:0005524">
    <property type="term" value="F:ATP binding"/>
    <property type="evidence" value="ECO:0007669"/>
    <property type="project" value="UniProtKB-KW"/>
</dbReference>
<dbReference type="GO" id="GO:0016879">
    <property type="term" value="F:ligase activity, forming carbon-nitrogen bonds"/>
    <property type="evidence" value="ECO:0007669"/>
    <property type="project" value="UniProtKB-UniRule"/>
</dbReference>
<dbReference type="GO" id="GO:0000049">
    <property type="term" value="F:tRNA binding"/>
    <property type="evidence" value="ECO:0007669"/>
    <property type="project" value="UniProtKB-KW"/>
</dbReference>
<dbReference type="GO" id="GO:0006400">
    <property type="term" value="P:tRNA modification"/>
    <property type="evidence" value="ECO:0007669"/>
    <property type="project" value="UniProtKB-UniRule"/>
</dbReference>
<dbReference type="Gene3D" id="3.40.50.620">
    <property type="entry name" value="HUPs"/>
    <property type="match status" value="1"/>
</dbReference>
<dbReference type="HAMAP" id="MF_01539">
    <property type="entry name" value="TmcAL"/>
    <property type="match status" value="1"/>
</dbReference>
<dbReference type="InterPro" id="IPR014729">
    <property type="entry name" value="Rossmann-like_a/b/a_fold"/>
</dbReference>
<dbReference type="InterPro" id="IPR008513">
    <property type="entry name" value="tRNA(Met)_cyd_acetate_ligase"/>
</dbReference>
<dbReference type="NCBIfam" id="NF010191">
    <property type="entry name" value="PRK13670.1"/>
    <property type="match status" value="1"/>
</dbReference>
<dbReference type="PANTHER" id="PTHR37825">
    <property type="entry name" value="TRNA(MET) CYTIDINE ACETATE LIGASE"/>
    <property type="match status" value="1"/>
</dbReference>
<dbReference type="PANTHER" id="PTHR37825:SF1">
    <property type="entry name" value="TRNA(MET) CYTIDINE ACETATE LIGASE"/>
    <property type="match status" value="1"/>
</dbReference>
<dbReference type="Pfam" id="PF05636">
    <property type="entry name" value="HIGH_NTase1"/>
    <property type="match status" value="1"/>
</dbReference>
<dbReference type="SUPFAM" id="SSF52374">
    <property type="entry name" value="Nucleotidylyl transferase"/>
    <property type="match status" value="1"/>
</dbReference>
<organism>
    <name type="scientific">Thermotoga petrophila (strain ATCC BAA-488 / DSM 13995 / JCM 10881 / RKU-1)</name>
    <dbReference type="NCBI Taxonomy" id="390874"/>
    <lineage>
        <taxon>Bacteria</taxon>
        <taxon>Thermotogati</taxon>
        <taxon>Thermotogota</taxon>
        <taxon>Thermotogae</taxon>
        <taxon>Thermotogales</taxon>
        <taxon>Thermotogaceae</taxon>
        <taxon>Thermotoga</taxon>
    </lineage>
</organism>